<comment type="function">
    <text evidence="1">Excises uracil residues from the DNA which can arise as a result of misincorporation of dUMP residues by DNA polymerase or due to deamination of cytosine.</text>
</comment>
<comment type="catalytic activity">
    <reaction evidence="1">
        <text>Hydrolyzes single-stranded DNA or mismatched double-stranded DNA and polynucleotides, releasing free uracil.</text>
        <dbReference type="EC" id="3.2.2.27"/>
    </reaction>
</comment>
<comment type="subcellular location">
    <subcellularLocation>
        <location evidence="1">Cytoplasm</location>
    </subcellularLocation>
</comment>
<comment type="similarity">
    <text evidence="1">Belongs to the uracil-DNA glycosylase (UDG) superfamily. UNG family.</text>
</comment>
<proteinExistence type="inferred from homology"/>
<evidence type="ECO:0000255" key="1">
    <source>
        <dbReference type="HAMAP-Rule" id="MF_00148"/>
    </source>
</evidence>
<organism>
    <name type="scientific">Listeria monocytogenes serotype 4b (strain F2365)</name>
    <dbReference type="NCBI Taxonomy" id="265669"/>
    <lineage>
        <taxon>Bacteria</taxon>
        <taxon>Bacillati</taxon>
        <taxon>Bacillota</taxon>
        <taxon>Bacilli</taxon>
        <taxon>Bacillales</taxon>
        <taxon>Listeriaceae</taxon>
        <taxon>Listeria</taxon>
    </lineage>
</organism>
<reference key="1">
    <citation type="journal article" date="2004" name="Nucleic Acids Res.">
        <title>Whole genome comparisons of serotype 4b and 1/2a strains of the food-borne pathogen Listeria monocytogenes reveal new insights into the core genome components of this species.</title>
        <authorList>
            <person name="Nelson K.E."/>
            <person name="Fouts D.E."/>
            <person name="Mongodin E.F."/>
            <person name="Ravel J."/>
            <person name="DeBoy R.T."/>
            <person name="Kolonay J.F."/>
            <person name="Rasko D.A."/>
            <person name="Angiuoli S.V."/>
            <person name="Gill S.R."/>
            <person name="Paulsen I.T."/>
            <person name="Peterson J.D."/>
            <person name="White O."/>
            <person name="Nelson W.C."/>
            <person name="Nierman W.C."/>
            <person name="Beanan M.J."/>
            <person name="Brinkac L.M."/>
            <person name="Daugherty S.C."/>
            <person name="Dodson R.J."/>
            <person name="Durkin A.S."/>
            <person name="Madupu R."/>
            <person name="Haft D.H."/>
            <person name="Selengut J."/>
            <person name="Van Aken S.E."/>
            <person name="Khouri H.M."/>
            <person name="Fedorova N."/>
            <person name="Forberger H.A."/>
            <person name="Tran B."/>
            <person name="Kathariou S."/>
            <person name="Wonderling L.D."/>
            <person name="Uhlich G.A."/>
            <person name="Bayles D.O."/>
            <person name="Luchansky J.B."/>
            <person name="Fraser C.M."/>
        </authorList>
    </citation>
    <scope>NUCLEOTIDE SEQUENCE [LARGE SCALE GENOMIC DNA]</scope>
    <source>
        <strain>F2365</strain>
    </source>
</reference>
<protein>
    <recommendedName>
        <fullName evidence="1">Uracil-DNA glycosylase 2</fullName>
        <shortName evidence="1">UDG 2</shortName>
        <ecNumber evidence="1">3.2.2.27</ecNumber>
    </recommendedName>
</protein>
<name>UNG2_LISMF</name>
<feature type="chain" id="PRO_0000176112" description="Uracil-DNA glycosylase 2">
    <location>
        <begin position="1"/>
        <end position="224"/>
    </location>
</feature>
<feature type="active site" description="Proton acceptor" evidence="1">
    <location>
        <position position="64"/>
    </location>
</feature>
<sequence>MIKLGNDWDELLKDEFNQPYYLTLRQFLKKEYQTKKVFPDMYDIFNALKYTACKDVKVVILGQDPYHGPGQAHGLSFSVQQGVQIPPSLQNIYLELHNDLNCEIPNNGYLIRWADQGVLLLNTVLTVRAGQANSHRGQGWEILTNRIIEIINQKEEPVVFLLWGNNAKEKLQLLTNPKHTAFTSVHPSPLSASRGFMGCKHFSKTNQFLEQNGVKPIDWQIPSI</sequence>
<dbReference type="EC" id="3.2.2.27" evidence="1"/>
<dbReference type="EMBL" id="AE017262">
    <property type="protein sequence ID" value="AAT04012.1"/>
    <property type="molecule type" value="Genomic_DNA"/>
</dbReference>
<dbReference type="RefSeq" id="WP_003724752.1">
    <property type="nucleotide sequence ID" value="NC_002973.6"/>
</dbReference>
<dbReference type="SMR" id="Q720K2"/>
<dbReference type="KEGG" id="lmf:LMOf2365_1236"/>
<dbReference type="HOGENOM" id="CLU_032162_3_0_9"/>
<dbReference type="GO" id="GO:0005737">
    <property type="term" value="C:cytoplasm"/>
    <property type="evidence" value="ECO:0007669"/>
    <property type="project" value="UniProtKB-SubCell"/>
</dbReference>
<dbReference type="GO" id="GO:0004844">
    <property type="term" value="F:uracil DNA N-glycosylase activity"/>
    <property type="evidence" value="ECO:0007669"/>
    <property type="project" value="UniProtKB-UniRule"/>
</dbReference>
<dbReference type="GO" id="GO:0097510">
    <property type="term" value="P:base-excision repair, AP site formation via deaminated base removal"/>
    <property type="evidence" value="ECO:0007669"/>
    <property type="project" value="TreeGrafter"/>
</dbReference>
<dbReference type="CDD" id="cd10027">
    <property type="entry name" value="UDG-F1-like"/>
    <property type="match status" value="1"/>
</dbReference>
<dbReference type="FunFam" id="3.40.470.10:FF:000001">
    <property type="entry name" value="Uracil-DNA glycosylase"/>
    <property type="match status" value="1"/>
</dbReference>
<dbReference type="Gene3D" id="3.40.470.10">
    <property type="entry name" value="Uracil-DNA glycosylase-like domain"/>
    <property type="match status" value="1"/>
</dbReference>
<dbReference type="HAMAP" id="MF_00148">
    <property type="entry name" value="UDG"/>
    <property type="match status" value="1"/>
</dbReference>
<dbReference type="InterPro" id="IPR002043">
    <property type="entry name" value="UDG_fam1"/>
</dbReference>
<dbReference type="InterPro" id="IPR018085">
    <property type="entry name" value="Ura-DNA_Glyclase_AS"/>
</dbReference>
<dbReference type="InterPro" id="IPR005122">
    <property type="entry name" value="Uracil-DNA_glycosylase-like"/>
</dbReference>
<dbReference type="InterPro" id="IPR036895">
    <property type="entry name" value="Uracil-DNA_glycosylase-like_sf"/>
</dbReference>
<dbReference type="NCBIfam" id="NF003588">
    <property type="entry name" value="PRK05254.1-1"/>
    <property type="match status" value="1"/>
</dbReference>
<dbReference type="NCBIfam" id="NF003589">
    <property type="entry name" value="PRK05254.1-2"/>
    <property type="match status" value="1"/>
</dbReference>
<dbReference type="NCBIfam" id="NF003591">
    <property type="entry name" value="PRK05254.1-4"/>
    <property type="match status" value="1"/>
</dbReference>
<dbReference type="NCBIfam" id="NF003592">
    <property type="entry name" value="PRK05254.1-5"/>
    <property type="match status" value="1"/>
</dbReference>
<dbReference type="NCBIfam" id="TIGR00628">
    <property type="entry name" value="ung"/>
    <property type="match status" value="1"/>
</dbReference>
<dbReference type="PANTHER" id="PTHR11264">
    <property type="entry name" value="URACIL-DNA GLYCOSYLASE"/>
    <property type="match status" value="1"/>
</dbReference>
<dbReference type="PANTHER" id="PTHR11264:SF0">
    <property type="entry name" value="URACIL-DNA GLYCOSYLASE"/>
    <property type="match status" value="1"/>
</dbReference>
<dbReference type="Pfam" id="PF03167">
    <property type="entry name" value="UDG"/>
    <property type="match status" value="1"/>
</dbReference>
<dbReference type="SMART" id="SM00986">
    <property type="entry name" value="UDG"/>
    <property type="match status" value="1"/>
</dbReference>
<dbReference type="SMART" id="SM00987">
    <property type="entry name" value="UreE_C"/>
    <property type="match status" value="1"/>
</dbReference>
<dbReference type="SUPFAM" id="SSF52141">
    <property type="entry name" value="Uracil-DNA glycosylase-like"/>
    <property type="match status" value="1"/>
</dbReference>
<dbReference type="PROSITE" id="PS00130">
    <property type="entry name" value="U_DNA_GLYCOSYLASE"/>
    <property type="match status" value="1"/>
</dbReference>
<accession>Q720K2</accession>
<gene>
    <name evidence="1" type="primary">ung2</name>
    <name type="ordered locus">LMOf2365_1236</name>
</gene>
<keyword id="KW-0963">Cytoplasm</keyword>
<keyword id="KW-0227">DNA damage</keyword>
<keyword id="KW-0234">DNA repair</keyword>
<keyword id="KW-0378">Hydrolase</keyword>